<gene>
    <name type="primary">ACP2</name>
</gene>
<sequence length="423" mass="48344">MAGKRSGWSRAALLQLLLGVNLVVMPPTRARSLRFVTLLYRHGDRSPVKTYPKDPYQEEEWPQGFGQLTKEGMLQHWELGQALRQRYHGFLNTSYHRQEVYVRSTDFDRTLMSAEANLAGLFPPNGMQRFNPNISWQPIPVHTVPITEDRLLKFPLGPCPRYEQLQNETRQTPEYQNESSRNAQFLDMVANETGLTDLTLETVWNVYDTLFCEQTHGLRLPPWASPQTMQRLSRLKDFSFRFLFGIYQQAEKARLQGGVLLAQIRKNLTLMATTSQLPKLLVYSAHDTTLVALQMALDVYNGEQAPYASCHIFELYQEDSGNFSVEMYFRNESDKAPWPLSLPGCPHRCPLQDFLRLTEPVVPKDWQQECQLASGPADTEVIVALAVCGSILFLLIVLLLTVLFRMQAQPPGYRHVADGEDHA</sequence>
<accession>P11117</accession>
<accession>E9PCI1</accession>
<accession>Q561W5</accession>
<accession>Q9BTU7</accession>
<protein>
    <recommendedName>
        <fullName>Lysosomal acid phosphatase</fullName>
        <shortName>LAP</shortName>
        <ecNumber>3.1.3.2</ecNumber>
    </recommendedName>
</protein>
<organism>
    <name type="scientific">Homo sapiens</name>
    <name type="common">Human</name>
    <dbReference type="NCBI Taxonomy" id="9606"/>
    <lineage>
        <taxon>Eukaryota</taxon>
        <taxon>Metazoa</taxon>
        <taxon>Chordata</taxon>
        <taxon>Craniata</taxon>
        <taxon>Vertebrata</taxon>
        <taxon>Euteleostomi</taxon>
        <taxon>Mammalia</taxon>
        <taxon>Eutheria</taxon>
        <taxon>Euarchontoglires</taxon>
        <taxon>Primates</taxon>
        <taxon>Haplorrhini</taxon>
        <taxon>Catarrhini</taxon>
        <taxon>Hominidae</taxon>
        <taxon>Homo</taxon>
    </lineage>
</organism>
<feature type="signal peptide">
    <location>
        <begin position="1"/>
        <end position="30"/>
    </location>
</feature>
<feature type="chain" id="PRO_0000023960" description="Lysosomal acid phosphatase">
    <location>
        <begin position="31"/>
        <end position="423"/>
    </location>
</feature>
<feature type="topological domain" description="Lumenal" evidence="2">
    <location>
        <begin position="31"/>
        <end position="380"/>
    </location>
</feature>
<feature type="transmembrane region" description="Helical" evidence="2">
    <location>
        <begin position="381"/>
        <end position="401"/>
    </location>
</feature>
<feature type="topological domain" description="Cytoplasmic" evidence="2">
    <location>
        <begin position="402"/>
        <end position="423"/>
    </location>
</feature>
<feature type="active site" description="Nucleophile" evidence="1">
    <location>
        <position position="42"/>
    </location>
</feature>
<feature type="active site" description="Proton donor" evidence="1">
    <location>
        <position position="287"/>
    </location>
</feature>
<feature type="glycosylation site" description="N-linked (GlcNAc...) asparagine" evidence="5">
    <location>
        <position position="92"/>
    </location>
</feature>
<feature type="glycosylation site" description="N-linked (GlcNAc...) asparagine" evidence="5">
    <location>
        <position position="133"/>
    </location>
</feature>
<feature type="glycosylation site" description="N-linked (GlcNAc...) asparagine" evidence="5">
    <location>
        <position position="167"/>
    </location>
</feature>
<feature type="glycosylation site" description="N-linked (GlcNAc...) asparagine" evidence="5">
    <location>
        <position position="177"/>
    </location>
</feature>
<feature type="glycosylation site" description="N-linked (GlcNAc...) asparagine" evidence="12">
    <location>
        <position position="191"/>
    </location>
</feature>
<feature type="glycosylation site" description="N-linked (GlcNAc...) asparagine" evidence="5">
    <location>
        <position position="267"/>
    </location>
</feature>
<feature type="glycosylation site" description="N-linked (GlcNAc...) asparagine" evidence="12">
    <location>
        <position position="322"/>
    </location>
</feature>
<feature type="glycosylation site" description="N-linked (GlcNAc...) asparagine" evidence="5">
    <location>
        <position position="331"/>
    </location>
</feature>
<feature type="disulfide bond" evidence="1">
    <location>
        <begin position="159"/>
        <end position="370"/>
    </location>
</feature>
<feature type="disulfide bond" evidence="1">
    <location>
        <begin position="212"/>
        <end position="310"/>
    </location>
</feature>
<feature type="disulfide bond" evidence="1">
    <location>
        <begin position="345"/>
        <end position="349"/>
    </location>
</feature>
<feature type="splice variant" id="VSP_045629" description="In isoform 2." evidence="9">
    <original>LLKFPLGPCP</original>
    <variation>VRVASPSLGW</variation>
    <location>
        <begin position="151"/>
        <end position="160"/>
    </location>
</feature>
<feature type="splice variant" id="VSP_045630" description="In isoform 2." evidence="9">
    <location>
        <begin position="161"/>
        <end position="423"/>
    </location>
</feature>
<feature type="sequence variant" id="VAR_027801" description="In dbSNP:rs2167079." evidence="3 4">
    <original>R</original>
    <variation>Q</variation>
    <location>
        <position position="29"/>
    </location>
</feature>
<feature type="sequence variant" id="VAR_034394" description="In dbSNP:rs34425282.">
    <original>S</original>
    <variation>F</variation>
    <location>
        <position position="320"/>
    </location>
</feature>
<feature type="sequence variant" id="VAR_050519" description="In dbSNP:rs4647764.">
    <original>V</original>
    <variation>I</variation>
    <location>
        <position position="402"/>
    </location>
</feature>
<keyword id="KW-0025">Alternative splicing</keyword>
<keyword id="KW-0903">Direct protein sequencing</keyword>
<keyword id="KW-1015">Disulfide bond</keyword>
<keyword id="KW-0325">Glycoprotein</keyword>
<keyword id="KW-0378">Hydrolase</keyword>
<keyword id="KW-0458">Lysosome</keyword>
<keyword id="KW-0472">Membrane</keyword>
<keyword id="KW-1267">Proteomics identification</keyword>
<keyword id="KW-1185">Reference proteome</keyword>
<keyword id="KW-0732">Signal</keyword>
<keyword id="KW-0812">Transmembrane</keyword>
<keyword id="KW-1133">Transmembrane helix</keyword>
<dbReference type="EC" id="3.1.3.2"/>
<dbReference type="EMBL" id="X12548">
    <property type="protein sequence ID" value="CAA31064.1"/>
    <property type="molecule type" value="mRNA"/>
</dbReference>
<dbReference type="EMBL" id="X15525">
    <property type="protein sequence ID" value="CAA33542.1"/>
    <property type="molecule type" value="Genomic_DNA"/>
</dbReference>
<dbReference type="EMBL" id="X15526">
    <property type="protein sequence ID" value="CAA33542.1"/>
    <property type="status" value="JOINED"/>
    <property type="molecule type" value="Genomic_DNA"/>
</dbReference>
<dbReference type="EMBL" id="X15527">
    <property type="protein sequence ID" value="CAA33542.1"/>
    <property type="status" value="JOINED"/>
    <property type="molecule type" value="Genomic_DNA"/>
</dbReference>
<dbReference type="EMBL" id="X15528">
    <property type="protein sequence ID" value="CAA33542.1"/>
    <property type="status" value="JOINED"/>
    <property type="molecule type" value="Genomic_DNA"/>
</dbReference>
<dbReference type="EMBL" id="X15529">
    <property type="protein sequence ID" value="CAA33542.1"/>
    <property type="status" value="JOINED"/>
    <property type="molecule type" value="Genomic_DNA"/>
</dbReference>
<dbReference type="EMBL" id="X15530">
    <property type="protein sequence ID" value="CAA33542.1"/>
    <property type="status" value="JOINED"/>
    <property type="molecule type" value="Genomic_DNA"/>
</dbReference>
<dbReference type="EMBL" id="X15531">
    <property type="protein sequence ID" value="CAA33542.1"/>
    <property type="status" value="JOINED"/>
    <property type="molecule type" value="Genomic_DNA"/>
</dbReference>
<dbReference type="EMBL" id="X15532">
    <property type="protein sequence ID" value="CAA33542.1"/>
    <property type="status" value="JOINED"/>
    <property type="molecule type" value="Genomic_DNA"/>
</dbReference>
<dbReference type="EMBL" id="X15533">
    <property type="protein sequence ID" value="CAA33542.1"/>
    <property type="status" value="JOINED"/>
    <property type="molecule type" value="Genomic_DNA"/>
</dbReference>
<dbReference type="EMBL" id="X15534">
    <property type="protein sequence ID" value="CAA33542.1"/>
    <property type="status" value="JOINED"/>
    <property type="molecule type" value="Genomic_DNA"/>
</dbReference>
<dbReference type="EMBL" id="X15535">
    <property type="protein sequence ID" value="CAA33542.1"/>
    <property type="status" value="JOINED"/>
    <property type="molecule type" value="Genomic_DNA"/>
</dbReference>
<dbReference type="EMBL" id="DA382854">
    <property type="status" value="NOT_ANNOTATED_CDS"/>
    <property type="molecule type" value="mRNA"/>
</dbReference>
<dbReference type="EMBL" id="AC018410">
    <property type="status" value="NOT_ANNOTATED_CDS"/>
    <property type="molecule type" value="Genomic_DNA"/>
</dbReference>
<dbReference type="EMBL" id="BC003160">
    <property type="protein sequence ID" value="AAH03160.1"/>
    <property type="molecule type" value="mRNA"/>
</dbReference>
<dbReference type="EMBL" id="BC093010">
    <property type="protein sequence ID" value="AAH93010.1"/>
    <property type="molecule type" value="mRNA"/>
</dbReference>
<dbReference type="CCDS" id="CCDS7928.1">
    <molecule id="P11117-1"/>
</dbReference>
<dbReference type="PIR" id="S06167">
    <property type="entry name" value="S06167"/>
</dbReference>
<dbReference type="RefSeq" id="NP_001289418.1">
    <property type="nucleotide sequence ID" value="NM_001302489.1"/>
</dbReference>
<dbReference type="RefSeq" id="NP_001289419.1">
    <property type="nucleotide sequence ID" value="NM_001302490.1"/>
</dbReference>
<dbReference type="RefSeq" id="NP_001289420.1">
    <property type="nucleotide sequence ID" value="NM_001302491.1"/>
</dbReference>
<dbReference type="RefSeq" id="NP_001289421.1">
    <property type="nucleotide sequence ID" value="NM_001302492.1"/>
</dbReference>
<dbReference type="RefSeq" id="NP_001601.1">
    <molecule id="P11117-1"/>
    <property type="nucleotide sequence ID" value="NM_001610.4"/>
</dbReference>
<dbReference type="BMRB" id="P11117"/>
<dbReference type="SMR" id="P11117"/>
<dbReference type="BioGRID" id="106569">
    <property type="interactions" value="135"/>
</dbReference>
<dbReference type="ELM" id="P11117"/>
<dbReference type="FunCoup" id="P11117">
    <property type="interactions" value="1373"/>
</dbReference>
<dbReference type="IntAct" id="P11117">
    <property type="interactions" value="74"/>
</dbReference>
<dbReference type="DEPOD" id="ACP2"/>
<dbReference type="GlyConnect" id="1476">
    <property type="glycosylation" value="13 N-Linked glycans (5 sites), 1 O-Linked glycan (1 site)"/>
</dbReference>
<dbReference type="GlyCosmos" id="P11117">
    <property type="glycosylation" value="9 sites, 13 glycans"/>
</dbReference>
<dbReference type="GlyGen" id="P11117">
    <property type="glycosylation" value="13 sites, 69 N-linked glycans (6 sites), 1 N-linked;o-linked glycan (4 sites), 2 O-linked glycans (5 sites)"/>
</dbReference>
<dbReference type="iPTMnet" id="P11117"/>
<dbReference type="PhosphoSitePlus" id="P11117"/>
<dbReference type="SwissPalm" id="P11117"/>
<dbReference type="BioMuta" id="ACP2"/>
<dbReference type="DMDM" id="115502439"/>
<dbReference type="CPTAC" id="CPTAC-1309"/>
<dbReference type="jPOST" id="P11117"/>
<dbReference type="MassIVE" id="P11117"/>
<dbReference type="PaxDb" id="9606-ENSP00000256997"/>
<dbReference type="PeptideAtlas" id="P11117"/>
<dbReference type="ProteomicsDB" id="19451"/>
<dbReference type="ProteomicsDB" id="52693">
    <molecule id="P11117-1"/>
</dbReference>
<dbReference type="Pumba" id="P11117"/>
<dbReference type="TopDownProteomics" id="P11117-1">
    <molecule id="P11117-1"/>
</dbReference>
<dbReference type="Antibodypedia" id="26620">
    <property type="antibodies" value="112 antibodies from 25 providers"/>
</dbReference>
<dbReference type="DNASU" id="53"/>
<dbReference type="Ensembl" id="ENST00000256997.9">
    <molecule id="P11117-1"/>
    <property type="protein sequence ID" value="ENSP00000256997.3"/>
    <property type="gene ID" value="ENSG00000134575.13"/>
</dbReference>
<dbReference type="Ensembl" id="ENST00000672073.1">
    <molecule id="P11117-1"/>
    <property type="protein sequence ID" value="ENSP00000500291.1"/>
    <property type="gene ID" value="ENSG00000134575.13"/>
</dbReference>
<dbReference type="GeneID" id="53"/>
<dbReference type="KEGG" id="hsa:53"/>
<dbReference type="MANE-Select" id="ENST00000672073.1">
    <property type="protein sequence ID" value="ENSP00000500291.1"/>
    <property type="RefSeq nucleotide sequence ID" value="NM_001610.4"/>
    <property type="RefSeq protein sequence ID" value="NP_001601.1"/>
</dbReference>
<dbReference type="UCSC" id="uc001nei.3">
    <molecule id="P11117-1"/>
    <property type="organism name" value="human"/>
</dbReference>
<dbReference type="AGR" id="HGNC:123"/>
<dbReference type="CTD" id="53"/>
<dbReference type="DisGeNET" id="53"/>
<dbReference type="GeneCards" id="ACP2"/>
<dbReference type="HGNC" id="HGNC:123">
    <property type="gene designation" value="ACP2"/>
</dbReference>
<dbReference type="HPA" id="ENSG00000134575">
    <property type="expression patterns" value="Low tissue specificity"/>
</dbReference>
<dbReference type="MalaCards" id="ACP2"/>
<dbReference type="MIM" id="171650">
    <property type="type" value="gene"/>
</dbReference>
<dbReference type="neXtProt" id="NX_P11117"/>
<dbReference type="OpenTargets" id="ENSG00000134575"/>
<dbReference type="PharmGKB" id="PA24447"/>
<dbReference type="VEuPathDB" id="HostDB:ENSG00000134575"/>
<dbReference type="eggNOG" id="KOG3720">
    <property type="taxonomic scope" value="Eukaryota"/>
</dbReference>
<dbReference type="GeneTree" id="ENSGT00940000158446"/>
<dbReference type="InParanoid" id="P11117"/>
<dbReference type="OMA" id="DPHQESD"/>
<dbReference type="OrthoDB" id="258392at2759"/>
<dbReference type="PAN-GO" id="P11117">
    <property type="GO annotations" value="4 GO annotations based on evolutionary models"/>
</dbReference>
<dbReference type="PhylomeDB" id="P11117"/>
<dbReference type="TreeFam" id="TF312893"/>
<dbReference type="PathwayCommons" id="P11117"/>
<dbReference type="SignaLink" id="P11117"/>
<dbReference type="BioGRID-ORCS" id="53">
    <property type="hits" value="12 hits in 1168 CRISPR screens"/>
</dbReference>
<dbReference type="ChiTaRS" id="ACP2">
    <property type="organism name" value="human"/>
</dbReference>
<dbReference type="GeneWiki" id="ACP2"/>
<dbReference type="GenomeRNAi" id="53"/>
<dbReference type="Pharos" id="P11117">
    <property type="development level" value="Tbio"/>
</dbReference>
<dbReference type="PRO" id="PR:P11117"/>
<dbReference type="Proteomes" id="UP000005640">
    <property type="component" value="Chromosome 11"/>
</dbReference>
<dbReference type="RNAct" id="P11117">
    <property type="molecule type" value="protein"/>
</dbReference>
<dbReference type="Bgee" id="ENSG00000134575">
    <property type="expression patterns" value="Expressed in right lobe of liver and 197 other cell types or tissues"/>
</dbReference>
<dbReference type="ExpressionAtlas" id="P11117">
    <property type="expression patterns" value="baseline and differential"/>
</dbReference>
<dbReference type="GO" id="GO:0070062">
    <property type="term" value="C:extracellular exosome"/>
    <property type="evidence" value="ECO:0007005"/>
    <property type="project" value="UniProtKB"/>
</dbReference>
<dbReference type="GO" id="GO:0043202">
    <property type="term" value="C:lysosomal lumen"/>
    <property type="evidence" value="ECO:0007669"/>
    <property type="project" value="UniProtKB-SubCell"/>
</dbReference>
<dbReference type="GO" id="GO:0005765">
    <property type="term" value="C:lysosomal membrane"/>
    <property type="evidence" value="ECO:0007669"/>
    <property type="project" value="UniProtKB-SubCell"/>
</dbReference>
<dbReference type="GO" id="GO:0005764">
    <property type="term" value="C:lysosome"/>
    <property type="evidence" value="ECO:0000314"/>
    <property type="project" value="MGI"/>
</dbReference>
<dbReference type="GO" id="GO:0016020">
    <property type="term" value="C:membrane"/>
    <property type="evidence" value="ECO:0007005"/>
    <property type="project" value="UniProtKB"/>
</dbReference>
<dbReference type="GO" id="GO:0003993">
    <property type="term" value="F:acid phosphatase activity"/>
    <property type="evidence" value="ECO:0000318"/>
    <property type="project" value="GO_Central"/>
</dbReference>
<dbReference type="GO" id="GO:0007040">
    <property type="term" value="P:lysosome organization"/>
    <property type="evidence" value="ECO:0000318"/>
    <property type="project" value="GO_Central"/>
</dbReference>
<dbReference type="GO" id="GO:0001501">
    <property type="term" value="P:skeletal system development"/>
    <property type="evidence" value="ECO:0007669"/>
    <property type="project" value="Ensembl"/>
</dbReference>
<dbReference type="CDD" id="cd07061">
    <property type="entry name" value="HP_HAP_like"/>
    <property type="match status" value="1"/>
</dbReference>
<dbReference type="FunFam" id="3.40.50.1240:FF:000010">
    <property type="entry name" value="Prostatic acid phosphatase"/>
    <property type="match status" value="1"/>
</dbReference>
<dbReference type="Gene3D" id="3.40.50.1240">
    <property type="entry name" value="Phosphoglycerate mutase-like"/>
    <property type="match status" value="1"/>
</dbReference>
<dbReference type="InterPro" id="IPR033379">
    <property type="entry name" value="Acid_Pase_AS"/>
</dbReference>
<dbReference type="InterPro" id="IPR000560">
    <property type="entry name" value="His_Pase_clade-2"/>
</dbReference>
<dbReference type="InterPro" id="IPR029033">
    <property type="entry name" value="His_PPase_superfam"/>
</dbReference>
<dbReference type="InterPro" id="IPR050645">
    <property type="entry name" value="Histidine_acid_phosphatase"/>
</dbReference>
<dbReference type="PANTHER" id="PTHR11567">
    <property type="entry name" value="ACID PHOSPHATASE-RELATED"/>
    <property type="match status" value="1"/>
</dbReference>
<dbReference type="PANTHER" id="PTHR11567:SF180">
    <property type="entry name" value="LYSOSOMAL ACID PHOSPHATASE"/>
    <property type="match status" value="1"/>
</dbReference>
<dbReference type="Pfam" id="PF00328">
    <property type="entry name" value="His_Phos_2"/>
    <property type="match status" value="1"/>
</dbReference>
<dbReference type="SUPFAM" id="SSF53254">
    <property type="entry name" value="Phosphoglycerate mutase-like"/>
    <property type="match status" value="1"/>
</dbReference>
<dbReference type="PROSITE" id="PS00616">
    <property type="entry name" value="HIS_ACID_PHOSPHAT_1"/>
    <property type="match status" value="1"/>
</dbReference>
<dbReference type="PROSITE" id="PS00778">
    <property type="entry name" value="HIS_ACID_PHOSPHAT_2"/>
    <property type="match status" value="1"/>
</dbReference>
<reference key="1">
    <citation type="journal article" date="1988" name="EMBO J.">
        <title>Human lysosomal acid phosphatase: cloning, expression and chromosomal assignment.</title>
        <authorList>
            <person name="Pohlmann R."/>
            <person name="Krentler C."/>
            <person name="Schmidt B."/>
            <person name="Schroeder W."/>
            <person name="Lorkowski G."/>
            <person name="Culley J."/>
            <person name="Mersmann G."/>
            <person name="Geier C."/>
            <person name="Waheed A."/>
            <person name="Gottschalk S."/>
            <person name="Grzeschik K.H."/>
            <person name="Hasikik A."/>
            <person name="von Figura K."/>
        </authorList>
    </citation>
    <scope>NUCLEOTIDE SEQUENCE [MRNA] (ISOFORM 1)</scope>
    <scope>PARTIAL PROTEIN SEQUENCE</scope>
    <source>
        <tissue>Placenta</tissue>
    </source>
</reference>
<reference key="2">
    <citation type="journal article" date="1989" name="Eur. J. Biochem.">
        <title>Structure of the human lysosomal acid phosphatase gene.</title>
        <authorList>
            <person name="Geier C."/>
            <person name="von Figura K."/>
            <person name="Pohlmann R."/>
        </authorList>
    </citation>
    <scope>NUCLEOTIDE SEQUENCE [GENOMIC DNA]</scope>
    <source>
        <tissue>Leukocyte</tissue>
    </source>
</reference>
<reference key="3">
    <citation type="journal article" date="2004" name="Nat. Genet.">
        <title>Complete sequencing and characterization of 21,243 full-length human cDNAs.</title>
        <authorList>
            <person name="Ota T."/>
            <person name="Suzuki Y."/>
            <person name="Nishikawa T."/>
            <person name="Otsuki T."/>
            <person name="Sugiyama T."/>
            <person name="Irie R."/>
            <person name="Wakamatsu A."/>
            <person name="Hayashi K."/>
            <person name="Sato H."/>
            <person name="Nagai K."/>
            <person name="Kimura K."/>
            <person name="Makita H."/>
            <person name="Sekine M."/>
            <person name="Obayashi M."/>
            <person name="Nishi T."/>
            <person name="Shibahara T."/>
            <person name="Tanaka T."/>
            <person name="Ishii S."/>
            <person name="Yamamoto J."/>
            <person name="Saito K."/>
            <person name="Kawai Y."/>
            <person name="Isono Y."/>
            <person name="Nakamura Y."/>
            <person name="Nagahari K."/>
            <person name="Murakami K."/>
            <person name="Yasuda T."/>
            <person name="Iwayanagi T."/>
            <person name="Wagatsuma M."/>
            <person name="Shiratori A."/>
            <person name="Sudo H."/>
            <person name="Hosoiri T."/>
            <person name="Kaku Y."/>
            <person name="Kodaira H."/>
            <person name="Kondo H."/>
            <person name="Sugawara M."/>
            <person name="Takahashi M."/>
            <person name="Kanda K."/>
            <person name="Yokoi T."/>
            <person name="Furuya T."/>
            <person name="Kikkawa E."/>
            <person name="Omura Y."/>
            <person name="Abe K."/>
            <person name="Kamihara K."/>
            <person name="Katsuta N."/>
            <person name="Sato K."/>
            <person name="Tanikawa M."/>
            <person name="Yamazaki M."/>
            <person name="Ninomiya K."/>
            <person name="Ishibashi T."/>
            <person name="Yamashita H."/>
            <person name="Murakawa K."/>
            <person name="Fujimori K."/>
            <person name="Tanai H."/>
            <person name="Kimata M."/>
            <person name="Watanabe M."/>
            <person name="Hiraoka S."/>
            <person name="Chiba Y."/>
            <person name="Ishida S."/>
            <person name="Ono Y."/>
            <person name="Takiguchi S."/>
            <person name="Watanabe S."/>
            <person name="Yosida M."/>
            <person name="Hotuta T."/>
            <person name="Kusano J."/>
            <person name="Kanehori K."/>
            <person name="Takahashi-Fujii A."/>
            <person name="Hara H."/>
            <person name="Tanase T.-O."/>
            <person name="Nomura Y."/>
            <person name="Togiya S."/>
            <person name="Komai F."/>
            <person name="Hara R."/>
            <person name="Takeuchi K."/>
            <person name="Arita M."/>
            <person name="Imose N."/>
            <person name="Musashino K."/>
            <person name="Yuuki H."/>
            <person name="Oshima A."/>
            <person name="Sasaki N."/>
            <person name="Aotsuka S."/>
            <person name="Yoshikawa Y."/>
            <person name="Matsunawa H."/>
            <person name="Ichihara T."/>
            <person name="Shiohata N."/>
            <person name="Sano S."/>
            <person name="Moriya S."/>
            <person name="Momiyama H."/>
            <person name="Satoh N."/>
            <person name="Takami S."/>
            <person name="Terashima Y."/>
            <person name="Suzuki O."/>
            <person name="Nakagawa S."/>
            <person name="Senoh A."/>
            <person name="Mizoguchi H."/>
            <person name="Goto Y."/>
            <person name="Shimizu F."/>
            <person name="Wakebe H."/>
            <person name="Hishigaki H."/>
            <person name="Watanabe T."/>
            <person name="Sugiyama A."/>
            <person name="Takemoto M."/>
            <person name="Kawakami B."/>
            <person name="Yamazaki M."/>
            <person name="Watanabe K."/>
            <person name="Kumagai A."/>
            <person name="Itakura S."/>
            <person name="Fukuzumi Y."/>
            <person name="Fujimori Y."/>
            <person name="Komiyama M."/>
            <person name="Tashiro H."/>
            <person name="Tanigami A."/>
            <person name="Fujiwara T."/>
            <person name="Ono T."/>
            <person name="Yamada K."/>
            <person name="Fujii Y."/>
            <person name="Ozaki K."/>
            <person name="Hirao M."/>
            <person name="Ohmori Y."/>
            <person name="Kawabata A."/>
            <person name="Hikiji T."/>
            <person name="Kobatake N."/>
            <person name="Inagaki H."/>
            <person name="Ikema Y."/>
            <person name="Okamoto S."/>
            <person name="Okitani R."/>
            <person name="Kawakami T."/>
            <person name="Noguchi S."/>
            <person name="Itoh T."/>
            <person name="Shigeta K."/>
            <person name="Senba T."/>
            <person name="Matsumura K."/>
            <person name="Nakajima Y."/>
            <person name="Mizuno T."/>
            <person name="Morinaga M."/>
            <person name="Sasaki M."/>
            <person name="Togashi T."/>
            <person name="Oyama M."/>
            <person name="Hata H."/>
            <person name="Watanabe M."/>
            <person name="Komatsu T."/>
            <person name="Mizushima-Sugano J."/>
            <person name="Satoh T."/>
            <person name="Shirai Y."/>
            <person name="Takahashi Y."/>
            <person name="Nakagawa K."/>
            <person name="Okumura K."/>
            <person name="Nagase T."/>
            <person name="Nomura N."/>
            <person name="Kikuchi H."/>
            <person name="Masuho Y."/>
            <person name="Yamashita R."/>
            <person name="Nakai K."/>
            <person name="Yada T."/>
            <person name="Nakamura Y."/>
            <person name="Ohara O."/>
            <person name="Isogai T."/>
            <person name="Sugano S."/>
        </authorList>
    </citation>
    <scope>NUCLEOTIDE SEQUENCE [LARGE SCALE MRNA] (ISOFORM 2)</scope>
    <scope>VARIANT GLN-29</scope>
    <source>
        <tissue>Thalamus</tissue>
    </source>
</reference>
<reference key="4">
    <citation type="journal article" date="2006" name="Nature">
        <title>Human chromosome 11 DNA sequence and analysis including novel gene identification.</title>
        <authorList>
            <person name="Taylor T.D."/>
            <person name="Noguchi H."/>
            <person name="Totoki Y."/>
            <person name="Toyoda A."/>
            <person name="Kuroki Y."/>
            <person name="Dewar K."/>
            <person name="Lloyd C."/>
            <person name="Itoh T."/>
            <person name="Takeda T."/>
            <person name="Kim D.-W."/>
            <person name="She X."/>
            <person name="Barlow K.F."/>
            <person name="Bloom T."/>
            <person name="Bruford E."/>
            <person name="Chang J.L."/>
            <person name="Cuomo C.A."/>
            <person name="Eichler E."/>
            <person name="FitzGerald M.G."/>
            <person name="Jaffe D.B."/>
            <person name="LaButti K."/>
            <person name="Nicol R."/>
            <person name="Park H.-S."/>
            <person name="Seaman C."/>
            <person name="Sougnez C."/>
            <person name="Yang X."/>
            <person name="Zimmer A.R."/>
            <person name="Zody M.C."/>
            <person name="Birren B.W."/>
            <person name="Nusbaum C."/>
            <person name="Fujiyama A."/>
            <person name="Hattori M."/>
            <person name="Rogers J."/>
            <person name="Lander E.S."/>
            <person name="Sakaki Y."/>
        </authorList>
    </citation>
    <scope>NUCLEOTIDE SEQUENCE [LARGE SCALE GENOMIC DNA]</scope>
</reference>
<reference key="5">
    <citation type="journal article" date="2004" name="Genome Res.">
        <title>The status, quality, and expansion of the NIH full-length cDNA project: the Mammalian Gene Collection (MGC).</title>
        <authorList>
            <consortium name="The MGC Project Team"/>
        </authorList>
    </citation>
    <scope>NUCLEOTIDE SEQUENCE [LARGE SCALE MRNA] (ISOFORM 1)</scope>
    <scope>VARIANT GLN-29</scope>
    <source>
        <tissue>Kidney</tissue>
        <tissue>Placenta</tissue>
    </source>
</reference>
<reference key="6">
    <citation type="journal article" date="1989" name="EMBO J.">
        <title>Sequential processing of lysosomal acid phosphatase by a cytoplasmic thiol proteinase and a lysosomal aspartyl proteinase.</title>
        <authorList>
            <person name="Gottschalk S."/>
            <person name="Waheed A."/>
            <person name="Schmidt B."/>
            <person name="Laidler P."/>
            <person name="von Figura K."/>
        </authorList>
    </citation>
    <scope>PARTIAL PROTEIN SEQUENCE</scope>
    <scope>PROTEOLYTIC PROCESSING</scope>
    <scope>SUBCELLULAR LOCATION</scope>
</reference>
<reference key="7">
    <citation type="journal article" date="1970" name="N. Engl. J. Med.">
        <title>Deficiency of lysosomal acid phosphatase. A new familial metabolic disorder.</title>
        <authorList>
            <person name="Nadler H.L."/>
            <person name="Egan T.J."/>
        </authorList>
    </citation>
    <scope>DISEASE</scope>
</reference>
<reference key="8">
    <citation type="journal article" date="1988" name="EMBO J.">
        <title>Human lysosomal acid phosphatase is transported as a transmembrane protein to lysosomes in transfected baby hamster kidney cells.</title>
        <authorList>
            <person name="Waheed A."/>
            <person name="Gottschalk S."/>
            <person name="Hille A."/>
            <person name="Krentler C."/>
            <person name="Pohlmann R."/>
            <person name="Braulke T."/>
            <person name="Hauser H."/>
            <person name="Geuze H."/>
            <person name="von Figura K."/>
        </authorList>
    </citation>
    <scope>SUBCELLULAR LOCATION</scope>
    <scope>GLYCOSYLATION</scope>
    <scope>MEMBRANE TOPOLOGY</scope>
    <scope>PROTEOLYTIC PROCESSING</scope>
</reference>
<reference key="9">
    <citation type="journal article" date="2009" name="J. Proteome Res.">
        <title>Glycoproteomics analysis of human liver tissue by combination of multiple enzyme digestion and hydrazide chemistry.</title>
        <authorList>
            <person name="Chen R."/>
            <person name="Jiang X."/>
            <person name="Sun D."/>
            <person name="Han G."/>
            <person name="Wang F."/>
            <person name="Ye M."/>
            <person name="Wang L."/>
            <person name="Zou H."/>
        </authorList>
    </citation>
    <scope>GLYCOSYLATION [LARGE SCALE ANALYSIS] AT ASN-92; ASN-133; ASN-167; ASN-177; ASN-267 AND ASN-331</scope>
    <source>
        <tissue>Liver</tissue>
    </source>
</reference>
<reference key="10">
    <citation type="journal article" date="2014" name="J. Proteomics">
        <title>An enzyme assisted RP-RPLC approach for in-depth analysis of human liver phosphoproteome.</title>
        <authorList>
            <person name="Bian Y."/>
            <person name="Song C."/>
            <person name="Cheng K."/>
            <person name="Dong M."/>
            <person name="Wang F."/>
            <person name="Huang J."/>
            <person name="Sun D."/>
            <person name="Wang L."/>
            <person name="Ye M."/>
            <person name="Zou H."/>
        </authorList>
    </citation>
    <scope>IDENTIFICATION BY MASS SPECTROMETRY [LARGE SCALE ANALYSIS]</scope>
    <source>
        <tissue>Liver</tissue>
    </source>
</reference>
<proteinExistence type="evidence at protein level"/>
<name>PPAL_HUMAN</name>
<comment type="catalytic activity">
    <reaction>
        <text>a phosphate monoester + H2O = an alcohol + phosphate</text>
        <dbReference type="Rhea" id="RHEA:15017"/>
        <dbReference type="ChEBI" id="CHEBI:15377"/>
        <dbReference type="ChEBI" id="CHEBI:30879"/>
        <dbReference type="ChEBI" id="CHEBI:43474"/>
        <dbReference type="ChEBI" id="CHEBI:67140"/>
        <dbReference type="EC" id="3.1.3.2"/>
    </reaction>
</comment>
<comment type="interaction">
    <interactant intactId="EBI-2907070">
        <id>P11117</id>
    </interactant>
    <interactant intactId="EBI-11954292">
        <id>Q86V38</id>
        <label>ATN1</label>
    </interactant>
    <organismsDiffer>false</organismsDiffer>
    <experiments>3</experiments>
</comment>
<comment type="interaction">
    <interactant intactId="EBI-2907070">
        <id>P11117</id>
    </interactant>
    <interactant intactId="EBI-975200">
        <id>Q9UQC2</id>
        <label>GAB2</label>
    </interactant>
    <organismsDiffer>false</organismsDiffer>
    <experiments>3</experiments>
</comment>
<comment type="interaction">
    <interactant intactId="EBI-2907070">
        <id>P11117</id>
    </interactant>
    <interactant intactId="EBI-2432309">
        <id>Q92876</id>
        <label>KLK6</label>
    </interactant>
    <organismsDiffer>false</organismsDiffer>
    <experiments>3</experiments>
</comment>
<comment type="interaction">
    <interactant intactId="EBI-2907070">
        <id>P11117</id>
    </interactant>
    <interactant intactId="EBI-1307">
        <id>Q13153</id>
        <label>PAK1</label>
    </interactant>
    <organismsDiffer>false</organismsDiffer>
    <experiments>3</experiments>
</comment>
<comment type="interaction">
    <interactant intactId="EBI-2907070">
        <id>P11117</id>
    </interactant>
    <interactant intactId="EBI-18055230">
        <id>P34981</id>
        <label>TRHR</label>
    </interactant>
    <organismsDiffer>false</organismsDiffer>
    <experiments>2</experiments>
</comment>
<comment type="subcellular location">
    <subcellularLocation>
        <location evidence="6 7">Lysosome membrane</location>
        <topology evidence="2">Single-pass membrane protein</topology>
        <orientation evidence="11 12">Lumenal side</orientation>
    </subcellularLocation>
    <subcellularLocation>
        <location>Lysosome lumen</location>
    </subcellularLocation>
    <text evidence="6 7">The soluble form arises by proteolytic processing of the membrane-bound form.</text>
</comment>
<comment type="alternative products">
    <event type="alternative splicing"/>
    <isoform>
        <id>P11117-1</id>
        <name>1</name>
        <sequence type="displayed"/>
    </isoform>
    <isoform>
        <id>P11117-2</id>
        <name>2</name>
        <sequence type="described" ref="VSP_045629 VSP_045630"/>
    </isoform>
</comment>
<comment type="PTM">
    <text evidence="6 7">The membrane-bound form is converted to the soluble form by sequential proteolytic processing. First, the C-terminal cytoplasmic tail is removed. Cleavage by a lysosomal protease releases the soluble form in the lysosome lumen.</text>
</comment>
<comment type="PTM">
    <text evidence="5 7">N-glycosylated. The intermediates formed during enzymatic deglycosylation suggest that all eight predicted N-glycosylation sites are used.</text>
</comment>
<comment type="disease">
    <text evidence="8">Lysosomal acid phosphatase has been shown to be deficient in cultured fibroblasts from patients manifesting intermittent vomiting, hypotonia, lethargy, opisthotonos, terminal bleeding and death in early infancy.</text>
</comment>
<comment type="similarity">
    <text evidence="10">Belongs to the histidine acid phosphatase family.</text>
</comment>
<evidence type="ECO:0000250" key="1"/>
<evidence type="ECO:0000255" key="2"/>
<evidence type="ECO:0000269" key="3">
    <source>
    </source>
</evidence>
<evidence type="ECO:0000269" key="4">
    <source>
    </source>
</evidence>
<evidence type="ECO:0000269" key="5">
    <source>
    </source>
</evidence>
<evidence type="ECO:0000269" key="6">
    <source>
    </source>
</evidence>
<evidence type="ECO:0000269" key="7">
    <source>
    </source>
</evidence>
<evidence type="ECO:0000269" key="8">
    <source>
    </source>
</evidence>
<evidence type="ECO:0000303" key="9">
    <source>
    </source>
</evidence>
<evidence type="ECO:0000305" key="10"/>
<evidence type="ECO:0000305" key="11">
    <source>
    </source>
</evidence>
<evidence type="ECO:0000305" key="12">
    <source>
    </source>
</evidence>